<name>NCAP_I86A1</name>
<sequence>MASQGTKRSYEQMETDGERQNATEIRASVGKMIDGIGRFYIQMCTELKLSDYEGRLIQNSLTIERMVLSAFDERRNRYLEEHPSAGKDPKKTGGPIYKRVDGRWMRELVLYDKEEIRRIWRQANNGDDATRGLTHMMIWHSNLNDTTYQRTRALVRTGMDPRMCSLMQGSTLPRRSGAAGAAVKGIGTMVMELIRMIKRGINDRNFWRGENGRKTRSAYERMCNILKGKFQTAAQRAMMDQVRESRNPGNAEIEDLIFSARSALILRGSVAHKSCLPACVYGPAVSSGYDFEKEGYSLVGIDPFKLLQNSQVYSLIRPNENPAHKSQLVWMACHSAAFEDLRLLSFIRGTKVSPRGKLSTRGVQIASNENMDNMESSTLELRSRYWAIRTRSGGNTNQQRASAGQISVQPTFSVQRNLPFEKSTVMAAFTGNTEGRTSDMRAEIIRMMEGAKPEEVSFRGRGVFELSDEKATNPIVPSFDMSNEGSYFFGDNAEEYDN</sequence>
<organism>
    <name type="scientific">Influenza A virus (strain A/Memphis/6/1986 H3N2)</name>
    <dbReference type="NCBI Taxonomy" id="383571"/>
    <lineage>
        <taxon>Viruses</taxon>
        <taxon>Riboviria</taxon>
        <taxon>Orthornavirae</taxon>
        <taxon>Negarnaviricota</taxon>
        <taxon>Polyploviricotina</taxon>
        <taxon>Insthoviricetes</taxon>
        <taxon>Articulavirales</taxon>
        <taxon>Orthomyxoviridae</taxon>
        <taxon>Alphainfluenzavirus</taxon>
        <taxon>Alphainfluenzavirus influenzae</taxon>
        <taxon>Influenza A virus</taxon>
    </lineage>
</organism>
<dbReference type="EMBL" id="L07365">
    <property type="protein sequence ID" value="AAA51512.1"/>
    <property type="molecule type" value="Genomic_RNA"/>
</dbReference>
<dbReference type="SMR" id="Q07546"/>
<dbReference type="GO" id="GO:0019029">
    <property type="term" value="C:helical viral capsid"/>
    <property type="evidence" value="ECO:0007669"/>
    <property type="project" value="UniProtKB-UniRule"/>
</dbReference>
<dbReference type="GO" id="GO:0043657">
    <property type="term" value="C:host cell"/>
    <property type="evidence" value="ECO:0007669"/>
    <property type="project" value="GOC"/>
</dbReference>
<dbReference type="GO" id="GO:0042025">
    <property type="term" value="C:host cell nucleus"/>
    <property type="evidence" value="ECO:0007669"/>
    <property type="project" value="UniProtKB-SubCell"/>
</dbReference>
<dbReference type="GO" id="GO:1990904">
    <property type="term" value="C:ribonucleoprotein complex"/>
    <property type="evidence" value="ECO:0007669"/>
    <property type="project" value="UniProtKB-KW"/>
</dbReference>
<dbReference type="GO" id="GO:0019013">
    <property type="term" value="C:viral nucleocapsid"/>
    <property type="evidence" value="ECO:0007669"/>
    <property type="project" value="UniProtKB-UniRule"/>
</dbReference>
<dbReference type="GO" id="GO:0003723">
    <property type="term" value="F:RNA binding"/>
    <property type="evidence" value="ECO:0007669"/>
    <property type="project" value="UniProtKB-UniRule"/>
</dbReference>
<dbReference type="GO" id="GO:0005198">
    <property type="term" value="F:structural molecule activity"/>
    <property type="evidence" value="ECO:0007669"/>
    <property type="project" value="UniProtKB-UniRule"/>
</dbReference>
<dbReference type="GO" id="GO:0046718">
    <property type="term" value="P:symbiont entry into host cell"/>
    <property type="evidence" value="ECO:0007669"/>
    <property type="project" value="UniProtKB-KW"/>
</dbReference>
<dbReference type="GO" id="GO:0075732">
    <property type="term" value="P:viral penetration into host nucleus"/>
    <property type="evidence" value="ECO:0007669"/>
    <property type="project" value="UniProtKB-UniRule"/>
</dbReference>
<dbReference type="HAMAP" id="MF_04070">
    <property type="entry name" value="INFV_NCAP"/>
    <property type="match status" value="1"/>
</dbReference>
<dbReference type="InterPro" id="IPR002141">
    <property type="entry name" value="Flu_NP"/>
</dbReference>
<dbReference type="Pfam" id="PF00506">
    <property type="entry name" value="Flu_NP"/>
    <property type="match status" value="1"/>
</dbReference>
<dbReference type="SUPFAM" id="SSF161003">
    <property type="entry name" value="flu NP-like"/>
    <property type="match status" value="1"/>
</dbReference>
<comment type="function">
    <text evidence="1">Encapsidates the negative strand viral RNA, protecting it from nucleases. The encapsidated genomic RNA is termed the ribonucleoprotein (RNP) and serves as template for transcription and replication. The RNP needs to be localized in the host nucleus to start an infectious cycle, but is too large to diffuse through the nuclear pore complex. NP comprises at least 2 nuclear localization signals that are responsible for the active RNP import into the nucleus through cellular importin alpha/beta pathway. Later in the infection, nclear export of RNPs are mediated through viral proteins NEP interacting with M1 which binds nucleoproteins. It is possible that nucleoprotein binds directly host exportin-1/XPO1 and plays an active role in RNPs nuclear export. M1 interaction with RNP seems to hide nucleoprotein's nuclear localization signals. Soon after a virion infects a new cell, M1 dissociates from the RNP under acidification of the virion driven by M2 protein. Dissociation of M1 from RNP unmasks nucleoprotein's nuclear localization signals, targeting the RNP to the nucleus.</text>
</comment>
<comment type="subunit">
    <text evidence="1">Homomultimerizes to form the nucleocapsid. May bind host exportin-1/XPO1. Binds to viral genomic RNA. Protein-RNA contacts are mediated by a combination of electrostatic interactions between positively charged residues and the phosphate backbone and planar interactions between aromatic side chains and bases.</text>
</comment>
<comment type="subcellular location">
    <subcellularLocation>
        <location evidence="1">Virion</location>
    </subcellularLocation>
    <subcellularLocation>
        <location evidence="1">Host nucleus</location>
    </subcellularLocation>
</comment>
<comment type="PTM">
    <text evidence="1">Late in virus-infected cells, may be cleaved from a 56-kDa protein to a 53-kDa protein by a cellular caspase. This cleavage might be a marker for the onset of apoptosis in infected cells or have a specific function in virus host interaction.</text>
</comment>
<comment type="similarity">
    <text evidence="1">Belongs to the influenza viruses nucleoprotein family.</text>
</comment>
<feature type="chain" id="PRO_0000079081" description="Nucleoprotein">
    <location>
        <begin position="1"/>
        <end position="498"/>
    </location>
</feature>
<feature type="region of interest" description="Disordered" evidence="2">
    <location>
        <begin position="1"/>
        <end position="21"/>
    </location>
</feature>
<feature type="short sequence motif" description="Unconventional nuclear localization signal" evidence="1">
    <location>
        <begin position="1"/>
        <end position="18"/>
    </location>
</feature>
<feature type="short sequence motif" description="Bipartite nuclear localization signal" evidence="1">
    <location>
        <begin position="198"/>
        <end position="216"/>
    </location>
</feature>
<feature type="compositionally biased region" description="Basic and acidic residues" evidence="2">
    <location>
        <begin position="8"/>
        <end position="21"/>
    </location>
</feature>
<gene>
    <name evidence="1" type="primary">NP</name>
</gene>
<accession>Q07546</accession>
<evidence type="ECO:0000255" key="1">
    <source>
        <dbReference type="HAMAP-Rule" id="MF_04070"/>
    </source>
</evidence>
<evidence type="ECO:0000256" key="2">
    <source>
        <dbReference type="SAM" id="MobiDB-lite"/>
    </source>
</evidence>
<organismHost>
    <name type="scientific">Aves</name>
    <dbReference type="NCBI Taxonomy" id="8782"/>
</organismHost>
<organismHost>
    <name type="scientific">Cetacea</name>
    <name type="common">whales</name>
    <dbReference type="NCBI Taxonomy" id="9721"/>
</organismHost>
<organismHost>
    <name type="scientific">Homo sapiens</name>
    <name type="common">Human</name>
    <dbReference type="NCBI Taxonomy" id="9606"/>
</organismHost>
<organismHost>
    <name type="scientific">Phocidae</name>
    <name type="common">true seals</name>
    <dbReference type="NCBI Taxonomy" id="9709"/>
</organismHost>
<organismHost>
    <name type="scientific">Sus scrofa</name>
    <name type="common">Pig</name>
    <dbReference type="NCBI Taxonomy" id="9823"/>
</organismHost>
<protein>
    <recommendedName>
        <fullName evidence="1">Nucleoprotein</fullName>
    </recommendedName>
    <alternativeName>
        <fullName evidence="1">Nucleocapsid protein</fullName>
        <shortName evidence="1">Protein N</shortName>
    </alternativeName>
</protein>
<reference key="1">
    <citation type="journal article" date="1993" name="J. Virol.">
        <title>Analysis of the evolution and variation of the human influenza A virus nucleoprotein gene from 1933 to 1990.</title>
        <authorList>
            <person name="Shu L.L."/>
            <person name="Bean W.J."/>
            <person name="Webster R.G."/>
        </authorList>
    </citation>
    <scope>NUCLEOTIDE SEQUENCE [GENOMIC RNA]</scope>
</reference>
<keyword id="KW-0167">Capsid protein</keyword>
<keyword id="KW-1139">Helical capsid protein</keyword>
<keyword id="KW-1048">Host nucleus</keyword>
<keyword id="KW-0945">Host-virus interaction</keyword>
<keyword id="KW-0687">Ribonucleoprotein</keyword>
<keyword id="KW-0694">RNA-binding</keyword>
<keyword id="KW-0543">Viral nucleoprotein</keyword>
<keyword id="KW-1163">Viral penetration into host nucleus</keyword>
<keyword id="KW-0946">Virion</keyword>
<keyword id="KW-1160">Virus entry into host cell</keyword>
<proteinExistence type="inferred from homology"/>